<sequence length="1221" mass="136288">MIDVNKFESMQIGLASPNKIRSWSYGEVKKPETINYRTLKPEKDGLFDERIFGPTKDYACACGKYKGVRYKGIVCDRCGVEVTTSHVRRERMGHIELAAPVTHIWYFKGIPSRMGLVLDVSPKQLEEVIYFAAYIVIDPGDTGLEAKQLLTEAEYREEKAKYGNRFVAKMGAEAIRDLLKQVDLDKEVTALKAELQTLKGQKRTRAIRRLDILDAFRNSGNKPEWMVMETVPVIPPDLRPMVQLEGGRFATSDLNDLYRRVINRNNRLKKLLDMHAPGLIVQNEERMLQEAVDALIDNGRRGRPVVGPGNRPLKSISHMLKGKQGRFRQNLLGKRVDYSGRSVIDVSPELKFYQCGVPRPMALELFRPFVMRELVRRGIASNIKNAKRKIDREDDDIWDVLEYVIKERPVLLNRAPTLHRLSIQAFEPVLVPGKALRLHPLACEAYNADFDGDQMAIHVPLSDEAVAESRLLMLAAHHILTPKDGTPIVTPSQDIVLGNYWLTQAEIGREGEGMIFATPEEATIAYNNGDIHYHTIIGVSAASMPKKDWGAGHEDSVFVTTYGRLVFNSLFPDDYFYINEPTQDNLKQPMADKYFLEDGQDIQDKIAEIGQDLVATPFKKGFLGDTISEIYKRYRVQRTSEYLDDLKEMGYSASTISGLTIGMADIPETKTKDALVAEARKQVKQVSKMFRRGKLSDKERHDNIIKIWTDCKDAVQQEIAEFKDQKNPISVMQQSGARGNISNFTQLAGMRGLMATPSGELFEIPVISNFKEGLTVLELFMSTHGARKGMTDTALKTAQSGYLTRRLVDVAQDVIIREDDCGTDRGITAKAIVDKDAGLIESLYDRLVGRFTNRTIRDPQTGEVICSKGVLMDEQMAQKIVDAGVQEVQIRSILTCNTSHGICRKCYGRNLATAEEVEIGEAVGTVAAQSIGEPGTQLTLRTFHTGGVAGAEDITQGLPRVQELFEARNPKGRAVISEVDGVVDKIESNAAEHLQEITVKGKIDTRVYTIPYTAKPAVQEGDEIHRGDKLIPGSIDPKELIKVTDTLTTEEYILAEVQKSYRTQGVDLADKHAEVLTRQMLQKVRVLDPGETDILPGEVMDIAEFRDRNRDVIISGGIPATAQAYILGITKAALETNSFLSAASFQETTRVLTDASIRGKNDPLLGLKENVIIGKIIPAGTGMPIYRDQVPKADVQQPDSVYSIADLEKKMEDENKETESK</sequence>
<proteinExistence type="inferred from homology"/>
<feature type="chain" id="PRO_0000308841" description="DNA-directed RNA polymerase subunit beta'">
    <location>
        <begin position="1"/>
        <end position="1221"/>
    </location>
</feature>
<feature type="binding site" evidence="1">
    <location>
        <position position="60"/>
    </location>
    <ligand>
        <name>Zn(2+)</name>
        <dbReference type="ChEBI" id="CHEBI:29105"/>
        <label>1</label>
    </ligand>
</feature>
<feature type="binding site" evidence="1">
    <location>
        <position position="62"/>
    </location>
    <ligand>
        <name>Zn(2+)</name>
        <dbReference type="ChEBI" id="CHEBI:29105"/>
        <label>1</label>
    </ligand>
</feature>
<feature type="binding site" evidence="1">
    <location>
        <position position="75"/>
    </location>
    <ligand>
        <name>Zn(2+)</name>
        <dbReference type="ChEBI" id="CHEBI:29105"/>
        <label>1</label>
    </ligand>
</feature>
<feature type="binding site" evidence="1">
    <location>
        <position position="78"/>
    </location>
    <ligand>
        <name>Zn(2+)</name>
        <dbReference type="ChEBI" id="CHEBI:29105"/>
        <label>1</label>
    </ligand>
</feature>
<feature type="binding site" evidence="1">
    <location>
        <position position="449"/>
    </location>
    <ligand>
        <name>Mg(2+)</name>
        <dbReference type="ChEBI" id="CHEBI:18420"/>
    </ligand>
</feature>
<feature type="binding site" evidence="1">
    <location>
        <position position="451"/>
    </location>
    <ligand>
        <name>Mg(2+)</name>
        <dbReference type="ChEBI" id="CHEBI:18420"/>
    </ligand>
</feature>
<feature type="binding site" evidence="1">
    <location>
        <position position="453"/>
    </location>
    <ligand>
        <name>Mg(2+)</name>
        <dbReference type="ChEBI" id="CHEBI:18420"/>
    </ligand>
</feature>
<feature type="binding site" evidence="1">
    <location>
        <position position="821"/>
    </location>
    <ligand>
        <name>Zn(2+)</name>
        <dbReference type="ChEBI" id="CHEBI:29105"/>
        <label>2</label>
    </ligand>
</feature>
<feature type="binding site" evidence="1">
    <location>
        <position position="896"/>
    </location>
    <ligand>
        <name>Zn(2+)</name>
        <dbReference type="ChEBI" id="CHEBI:29105"/>
        <label>2</label>
    </ligand>
</feature>
<feature type="binding site" evidence="1">
    <location>
        <position position="903"/>
    </location>
    <ligand>
        <name>Zn(2+)</name>
        <dbReference type="ChEBI" id="CHEBI:29105"/>
        <label>2</label>
    </ligand>
</feature>
<feature type="binding site" evidence="1">
    <location>
        <position position="906"/>
    </location>
    <ligand>
        <name>Zn(2+)</name>
        <dbReference type="ChEBI" id="CHEBI:29105"/>
        <label>2</label>
    </ligand>
</feature>
<keyword id="KW-0240">DNA-directed RNA polymerase</keyword>
<keyword id="KW-0460">Magnesium</keyword>
<keyword id="KW-0479">Metal-binding</keyword>
<keyword id="KW-0548">Nucleotidyltransferase</keyword>
<keyword id="KW-1185">Reference proteome</keyword>
<keyword id="KW-0804">Transcription</keyword>
<keyword id="KW-0808">Transferase</keyword>
<keyword id="KW-0862">Zinc</keyword>
<dbReference type="EC" id="2.7.7.6" evidence="1"/>
<dbReference type="EMBL" id="CR954253">
    <property type="protein sequence ID" value="CAI97222.1"/>
    <property type="molecule type" value="Genomic_DNA"/>
</dbReference>
<dbReference type="RefSeq" id="WP_011543639.1">
    <property type="nucleotide sequence ID" value="NC_008054.1"/>
</dbReference>
<dbReference type="SMR" id="Q1GBM4"/>
<dbReference type="STRING" id="390333.Ldb0387"/>
<dbReference type="KEGG" id="ldb:Ldb0387"/>
<dbReference type="PATRIC" id="fig|390333.7.peg.346"/>
<dbReference type="eggNOG" id="COG0086">
    <property type="taxonomic scope" value="Bacteria"/>
</dbReference>
<dbReference type="HOGENOM" id="CLU_000524_3_0_9"/>
<dbReference type="BioCyc" id="LDEL390333:LDB_RS01645-MONOMER"/>
<dbReference type="Proteomes" id="UP000001259">
    <property type="component" value="Chromosome"/>
</dbReference>
<dbReference type="GO" id="GO:0000428">
    <property type="term" value="C:DNA-directed RNA polymerase complex"/>
    <property type="evidence" value="ECO:0007669"/>
    <property type="project" value="UniProtKB-KW"/>
</dbReference>
<dbReference type="GO" id="GO:0003677">
    <property type="term" value="F:DNA binding"/>
    <property type="evidence" value="ECO:0007669"/>
    <property type="project" value="UniProtKB-UniRule"/>
</dbReference>
<dbReference type="GO" id="GO:0003899">
    <property type="term" value="F:DNA-directed RNA polymerase activity"/>
    <property type="evidence" value="ECO:0007669"/>
    <property type="project" value="UniProtKB-UniRule"/>
</dbReference>
<dbReference type="GO" id="GO:0000287">
    <property type="term" value="F:magnesium ion binding"/>
    <property type="evidence" value="ECO:0007669"/>
    <property type="project" value="UniProtKB-UniRule"/>
</dbReference>
<dbReference type="GO" id="GO:0008270">
    <property type="term" value="F:zinc ion binding"/>
    <property type="evidence" value="ECO:0007669"/>
    <property type="project" value="UniProtKB-UniRule"/>
</dbReference>
<dbReference type="GO" id="GO:0006351">
    <property type="term" value="P:DNA-templated transcription"/>
    <property type="evidence" value="ECO:0007669"/>
    <property type="project" value="UniProtKB-UniRule"/>
</dbReference>
<dbReference type="CDD" id="cd02655">
    <property type="entry name" value="RNAP_beta'_C"/>
    <property type="match status" value="1"/>
</dbReference>
<dbReference type="CDD" id="cd01609">
    <property type="entry name" value="RNAP_beta'_N"/>
    <property type="match status" value="1"/>
</dbReference>
<dbReference type="FunFam" id="4.10.860.120:FF:000001">
    <property type="entry name" value="DNA-directed RNA polymerase subunit beta"/>
    <property type="match status" value="1"/>
</dbReference>
<dbReference type="Gene3D" id="1.10.132.30">
    <property type="match status" value="1"/>
</dbReference>
<dbReference type="Gene3D" id="1.10.150.390">
    <property type="match status" value="1"/>
</dbReference>
<dbReference type="Gene3D" id="1.10.1790.20">
    <property type="match status" value="1"/>
</dbReference>
<dbReference type="Gene3D" id="1.10.40.90">
    <property type="match status" value="1"/>
</dbReference>
<dbReference type="Gene3D" id="2.40.40.20">
    <property type="match status" value="1"/>
</dbReference>
<dbReference type="Gene3D" id="2.40.50.100">
    <property type="match status" value="1"/>
</dbReference>
<dbReference type="Gene3D" id="4.10.860.120">
    <property type="entry name" value="RNA polymerase II, clamp domain"/>
    <property type="match status" value="1"/>
</dbReference>
<dbReference type="Gene3D" id="1.10.274.100">
    <property type="entry name" value="RNA polymerase Rpb1, domain 3"/>
    <property type="match status" value="1"/>
</dbReference>
<dbReference type="HAMAP" id="MF_01322">
    <property type="entry name" value="RNApol_bact_RpoC"/>
    <property type="match status" value="1"/>
</dbReference>
<dbReference type="InterPro" id="IPR045867">
    <property type="entry name" value="DNA-dir_RpoC_beta_prime"/>
</dbReference>
<dbReference type="InterPro" id="IPR012754">
    <property type="entry name" value="DNA-dir_RpoC_beta_prime_bact"/>
</dbReference>
<dbReference type="InterPro" id="IPR000722">
    <property type="entry name" value="RNA_pol_asu"/>
</dbReference>
<dbReference type="InterPro" id="IPR006592">
    <property type="entry name" value="RNA_pol_N"/>
</dbReference>
<dbReference type="InterPro" id="IPR007080">
    <property type="entry name" value="RNA_pol_Rpb1_1"/>
</dbReference>
<dbReference type="InterPro" id="IPR007066">
    <property type="entry name" value="RNA_pol_Rpb1_3"/>
</dbReference>
<dbReference type="InterPro" id="IPR042102">
    <property type="entry name" value="RNA_pol_Rpb1_3_sf"/>
</dbReference>
<dbReference type="InterPro" id="IPR007083">
    <property type="entry name" value="RNA_pol_Rpb1_4"/>
</dbReference>
<dbReference type="InterPro" id="IPR007081">
    <property type="entry name" value="RNA_pol_Rpb1_5"/>
</dbReference>
<dbReference type="InterPro" id="IPR044893">
    <property type="entry name" value="RNA_pol_Rpb1_clamp_domain"/>
</dbReference>
<dbReference type="InterPro" id="IPR038120">
    <property type="entry name" value="Rpb1_funnel_sf"/>
</dbReference>
<dbReference type="NCBIfam" id="TIGR02386">
    <property type="entry name" value="rpoC_TIGR"/>
    <property type="match status" value="1"/>
</dbReference>
<dbReference type="PANTHER" id="PTHR19376">
    <property type="entry name" value="DNA-DIRECTED RNA POLYMERASE"/>
    <property type="match status" value="1"/>
</dbReference>
<dbReference type="PANTHER" id="PTHR19376:SF54">
    <property type="entry name" value="DNA-DIRECTED RNA POLYMERASE SUBUNIT BETA"/>
    <property type="match status" value="1"/>
</dbReference>
<dbReference type="Pfam" id="PF04997">
    <property type="entry name" value="RNA_pol_Rpb1_1"/>
    <property type="match status" value="1"/>
</dbReference>
<dbReference type="Pfam" id="PF00623">
    <property type="entry name" value="RNA_pol_Rpb1_2"/>
    <property type="match status" value="2"/>
</dbReference>
<dbReference type="Pfam" id="PF04983">
    <property type="entry name" value="RNA_pol_Rpb1_3"/>
    <property type="match status" value="1"/>
</dbReference>
<dbReference type="Pfam" id="PF05000">
    <property type="entry name" value="RNA_pol_Rpb1_4"/>
    <property type="match status" value="1"/>
</dbReference>
<dbReference type="Pfam" id="PF04998">
    <property type="entry name" value="RNA_pol_Rpb1_5"/>
    <property type="match status" value="1"/>
</dbReference>
<dbReference type="SMART" id="SM00663">
    <property type="entry name" value="RPOLA_N"/>
    <property type="match status" value="1"/>
</dbReference>
<dbReference type="SUPFAM" id="SSF64484">
    <property type="entry name" value="beta and beta-prime subunits of DNA dependent RNA-polymerase"/>
    <property type="match status" value="1"/>
</dbReference>
<organism>
    <name type="scientific">Lactobacillus delbrueckii subsp. bulgaricus (strain ATCC 11842 / DSM 20081 / BCRC 10696 / JCM 1002 / NBRC 13953 / NCIMB 11778 / NCTC 12712 / WDCM 00102 / Lb 14)</name>
    <dbReference type="NCBI Taxonomy" id="390333"/>
    <lineage>
        <taxon>Bacteria</taxon>
        <taxon>Bacillati</taxon>
        <taxon>Bacillota</taxon>
        <taxon>Bacilli</taxon>
        <taxon>Lactobacillales</taxon>
        <taxon>Lactobacillaceae</taxon>
        <taxon>Lactobacillus</taxon>
    </lineage>
</organism>
<protein>
    <recommendedName>
        <fullName evidence="1">DNA-directed RNA polymerase subunit beta'</fullName>
        <shortName evidence="1">RNAP subunit beta'</shortName>
        <ecNumber evidence="1">2.7.7.6</ecNumber>
    </recommendedName>
    <alternativeName>
        <fullName evidence="1">RNA polymerase subunit beta'</fullName>
    </alternativeName>
    <alternativeName>
        <fullName evidence="1">Transcriptase subunit beta'</fullName>
    </alternativeName>
</protein>
<accession>Q1GBM4</accession>
<reference key="1">
    <citation type="journal article" date="2006" name="Proc. Natl. Acad. Sci. U.S.A.">
        <title>The complete genome sequence of Lactobacillus bulgaricus reveals extensive and ongoing reductive evolution.</title>
        <authorList>
            <person name="van de Guchte M."/>
            <person name="Penaud S."/>
            <person name="Grimaldi C."/>
            <person name="Barbe V."/>
            <person name="Bryson K."/>
            <person name="Nicolas P."/>
            <person name="Robert C."/>
            <person name="Oztas S."/>
            <person name="Mangenot S."/>
            <person name="Couloux A."/>
            <person name="Loux V."/>
            <person name="Dervyn R."/>
            <person name="Bossy R."/>
            <person name="Bolotin A."/>
            <person name="Batto J.-M."/>
            <person name="Walunas T."/>
            <person name="Gibrat J.-F."/>
            <person name="Bessieres P."/>
            <person name="Weissenbach J."/>
            <person name="Ehrlich S.D."/>
            <person name="Maguin E."/>
        </authorList>
    </citation>
    <scope>NUCLEOTIDE SEQUENCE [LARGE SCALE GENOMIC DNA]</scope>
    <source>
        <strain>ATCC 11842 / DSM 20081 / BCRC 10696 / JCM 1002 / NBRC 13953 / NCIMB 11778 / NCTC 12712 / WDCM 00102 / Lb 14</strain>
    </source>
</reference>
<gene>
    <name evidence="1" type="primary">rpoC</name>
    <name type="ordered locus">Ldb0387</name>
</gene>
<comment type="function">
    <text evidence="1">DNA-dependent RNA polymerase catalyzes the transcription of DNA into RNA using the four ribonucleoside triphosphates as substrates.</text>
</comment>
<comment type="catalytic activity">
    <reaction evidence="1">
        <text>RNA(n) + a ribonucleoside 5'-triphosphate = RNA(n+1) + diphosphate</text>
        <dbReference type="Rhea" id="RHEA:21248"/>
        <dbReference type="Rhea" id="RHEA-COMP:14527"/>
        <dbReference type="Rhea" id="RHEA-COMP:17342"/>
        <dbReference type="ChEBI" id="CHEBI:33019"/>
        <dbReference type="ChEBI" id="CHEBI:61557"/>
        <dbReference type="ChEBI" id="CHEBI:140395"/>
        <dbReference type="EC" id="2.7.7.6"/>
    </reaction>
</comment>
<comment type="cofactor">
    <cofactor evidence="1">
        <name>Mg(2+)</name>
        <dbReference type="ChEBI" id="CHEBI:18420"/>
    </cofactor>
    <text evidence="1">Binds 1 Mg(2+) ion per subunit.</text>
</comment>
<comment type="cofactor">
    <cofactor evidence="1">
        <name>Zn(2+)</name>
        <dbReference type="ChEBI" id="CHEBI:29105"/>
    </cofactor>
    <text evidence="1">Binds 2 Zn(2+) ions per subunit.</text>
</comment>
<comment type="subunit">
    <text evidence="1">The RNAP catalytic core consists of 2 alpha, 1 beta, 1 beta' and 1 omega subunit. When a sigma factor is associated with the core the holoenzyme is formed, which can initiate transcription.</text>
</comment>
<comment type="similarity">
    <text evidence="1">Belongs to the RNA polymerase beta' chain family.</text>
</comment>
<name>RPOC_LACDA</name>
<evidence type="ECO:0000255" key="1">
    <source>
        <dbReference type="HAMAP-Rule" id="MF_01322"/>
    </source>
</evidence>